<accession>P32958</accession>
<feature type="chain" id="PRO_0000168112" description="Rod outer segment membrane protein 1">
    <location>
        <begin position="1"/>
        <end position="351"/>
    </location>
</feature>
<feature type="topological domain" description="Cytoplasmic" evidence="2">
    <location>
        <begin position="1"/>
        <end position="19"/>
    </location>
</feature>
<feature type="transmembrane region" description="Helical" evidence="2">
    <location>
        <begin position="20"/>
        <end position="44"/>
    </location>
</feature>
<feature type="topological domain" description="Lumenal" evidence="2">
    <location>
        <begin position="45"/>
        <end position="64"/>
    </location>
</feature>
<feature type="transmembrane region" description="Helical" evidence="2">
    <location>
        <begin position="65"/>
        <end position="84"/>
    </location>
</feature>
<feature type="topological domain" description="Cytoplasmic" evidence="2">
    <location>
        <begin position="85"/>
        <end position="102"/>
    </location>
</feature>
<feature type="transmembrane region" description="Helical" evidence="2">
    <location>
        <begin position="103"/>
        <end position="125"/>
    </location>
</feature>
<feature type="topological domain" description="Lumenal" evidence="2">
    <location>
        <begin position="126"/>
        <end position="263"/>
    </location>
</feature>
<feature type="transmembrane region" description="Helical" evidence="2">
    <location>
        <begin position="264"/>
        <end position="286"/>
    </location>
</feature>
<feature type="topological domain" description="Cytoplasmic" evidence="2">
    <location>
        <begin position="287"/>
        <end position="351"/>
    </location>
</feature>
<feature type="region of interest" description="Disordered" evidence="3">
    <location>
        <begin position="329"/>
        <end position="351"/>
    </location>
</feature>
<feature type="compositionally biased region" description="Basic and acidic residues" evidence="3">
    <location>
        <begin position="342"/>
        <end position="351"/>
    </location>
</feature>
<protein>
    <recommendedName>
        <fullName>Rod outer segment membrane protein 1</fullName>
        <shortName>ROSP1</shortName>
    </recommendedName>
</protein>
<name>ROM1_MOUSE</name>
<organism>
    <name type="scientific">Mus musculus</name>
    <name type="common">Mouse</name>
    <dbReference type="NCBI Taxonomy" id="10090"/>
    <lineage>
        <taxon>Eukaryota</taxon>
        <taxon>Metazoa</taxon>
        <taxon>Chordata</taxon>
        <taxon>Craniata</taxon>
        <taxon>Vertebrata</taxon>
        <taxon>Euteleostomi</taxon>
        <taxon>Mammalia</taxon>
        <taxon>Eutheria</taxon>
        <taxon>Euarchontoglires</taxon>
        <taxon>Glires</taxon>
        <taxon>Rodentia</taxon>
        <taxon>Myomorpha</taxon>
        <taxon>Muroidea</taxon>
        <taxon>Muridae</taxon>
        <taxon>Murinae</taxon>
        <taxon>Mus</taxon>
        <taxon>Mus</taxon>
    </lineage>
</organism>
<sequence length="351" mass="37265">MAPVLPVVLPLQPRIRLAQGIWLLSWLLALVGGLTLLCSGHLLVQLGHLGTFLAPSCSFPALPQTALAAGTVALGTGLGGAGASRASLDAAQYPPWRGVLTPLLAVGTAAGGGLLTLALGLALALPVSLNQGLEEGLEAALAHYKDTEVPGRCQAKRLMDELQLRYHCCGRHGYKDWFGVQWVSNRYLDPSDQDVVDRIQSNVEGLYLIDGVPFSCCNPHSPRPCLQSQLSDPYAHPLFDPRQPNLNLWAQGCHEVLLEHLQGLSGTLGSILAVTLLLQILVLLGLRYLQTALEGLGGVIDGEGEAQGYLFPGGLKDILKTAWLQGGLAHKPAPEEAPPDEEPPKEVLAEA</sequence>
<comment type="function">
    <text evidence="1 4">Plays a role in rod outer segment (ROS) morphogenesis (PubMed:10802659). May play a role with PRPH2 in the maintenance of the structure of ROS curved disks (By similarity). Plays a role in the organization of the ROS and maintenance of ROS disk diameter (PubMed:10802659). Involved in the maintenance of the retina outer nuclear layer (PubMed:10802659).</text>
</comment>
<comment type="subunit">
    <text evidence="1 5 6">Homodimer; disulfide-linked (By similarity). Forms a homotetramer (By similarity). Forms a heterotetramer with PRPH2 (PubMed:26406599, PubMed:29961824). Homotetramer and heterotetramer core complexes go on to form higher order complexes by formation of intermolecular disulfide bonds (By similarity). Interacts with STX3 isoform 3B (PubMed:26406599). Interacts with SNAP25 (PubMed:26406599).</text>
</comment>
<comment type="subcellular location">
    <subcellularLocation>
        <location evidence="8">Photoreceptor inner segment membrane</location>
        <topology evidence="2">Multi-pass membrane protein</topology>
    </subcellularLocation>
    <subcellularLocation>
        <location evidence="8 9">Photoreceptor outer segment membrane</location>
        <topology evidence="2">Multi-pass membrane protein</topology>
    </subcellularLocation>
</comment>
<comment type="tissue specificity">
    <text evidence="5">Expressed in the retina (at protein level).</text>
</comment>
<comment type="disruption phenotype">
    <text evidence="4">Knockout mice are viable, fertile and grossly phenotypically normal (PubMed:10802659). 50% reduction in maximal rod photoreceptor response at 9 months of age (PubMed:10802659). Progressive thinning of the retinal outer nuclear layer becomes evident at 1 month of age (PubMed:10802659). Evidence of rod photoreceptor degeneration, shortened rod outer segment (ROS) length, increased ROS disk diameter, and progressive disorganization of the ROS at 1 month of age, leading to near-complete loss of organization by 2 months of age, however organization returns to near normal levels by 4 months of age (PubMed:10802659). Rod photoreceptors progressively die by apoptosis (PubMed:10802659). Knockout does not affect localization of Prph2 or Abca4 to ROS disk rims (PubMed:10802659).</text>
</comment>
<comment type="similarity">
    <text evidence="7">Belongs to the PRPH2/ROM1 family.</text>
</comment>
<dbReference type="EMBL" id="M96760">
    <property type="protein sequence ID" value="AAA40063.1"/>
    <property type="molecule type" value="Genomic_DNA"/>
</dbReference>
<dbReference type="EMBL" id="BC014827">
    <property type="protein sequence ID" value="AAH14827.1"/>
    <property type="molecule type" value="mRNA"/>
</dbReference>
<dbReference type="CCDS" id="CCDS29559.1"/>
<dbReference type="PIR" id="I68620">
    <property type="entry name" value="I68620"/>
</dbReference>
<dbReference type="RefSeq" id="NP_033099.3">
    <property type="nucleotide sequence ID" value="NM_009073.4"/>
</dbReference>
<dbReference type="SMR" id="P32958"/>
<dbReference type="BioGRID" id="202954">
    <property type="interactions" value="2"/>
</dbReference>
<dbReference type="FunCoup" id="P32958">
    <property type="interactions" value="12"/>
</dbReference>
<dbReference type="STRING" id="10090.ENSMUSP00000093961"/>
<dbReference type="iPTMnet" id="P32958"/>
<dbReference type="PhosphoSitePlus" id="P32958"/>
<dbReference type="PaxDb" id="10090-ENSMUSP00000093961"/>
<dbReference type="ProteomicsDB" id="301643"/>
<dbReference type="Antibodypedia" id="28554">
    <property type="antibodies" value="85 antibodies from 22 providers"/>
</dbReference>
<dbReference type="DNASU" id="19881"/>
<dbReference type="Ensembl" id="ENSMUST00000096242.5">
    <property type="protein sequence ID" value="ENSMUSP00000093961.4"/>
    <property type="gene ID" value="ENSMUSG00000071648.5"/>
</dbReference>
<dbReference type="GeneID" id="19881"/>
<dbReference type="KEGG" id="mmu:19881"/>
<dbReference type="UCSC" id="uc008goc.2">
    <property type="organism name" value="mouse"/>
</dbReference>
<dbReference type="AGR" id="MGI:97998"/>
<dbReference type="CTD" id="6094"/>
<dbReference type="MGI" id="MGI:97998">
    <property type="gene designation" value="Rom1"/>
</dbReference>
<dbReference type="VEuPathDB" id="HostDB:ENSMUSG00000071648"/>
<dbReference type="eggNOG" id="KOG3882">
    <property type="taxonomic scope" value="Eukaryota"/>
</dbReference>
<dbReference type="GeneTree" id="ENSGT00940000159921"/>
<dbReference type="HOGENOM" id="CLU_068903_0_0_1"/>
<dbReference type="InParanoid" id="P32958"/>
<dbReference type="OMA" id="AARYPPW"/>
<dbReference type="OrthoDB" id="9836210at2759"/>
<dbReference type="PhylomeDB" id="P32958"/>
<dbReference type="TreeFam" id="TF331684"/>
<dbReference type="BioGRID-ORCS" id="19881">
    <property type="hits" value="3 hits in 77 CRISPR screens"/>
</dbReference>
<dbReference type="PRO" id="PR:P32958"/>
<dbReference type="Proteomes" id="UP000000589">
    <property type="component" value="Chromosome 19"/>
</dbReference>
<dbReference type="RNAct" id="P32958">
    <property type="molecule type" value="protein"/>
</dbReference>
<dbReference type="Bgee" id="ENSMUSG00000071648">
    <property type="expression patterns" value="Expressed in retinal neural layer and 130 other cell types or tissues"/>
</dbReference>
<dbReference type="GO" id="GO:0001750">
    <property type="term" value="C:photoreceptor outer segment"/>
    <property type="evidence" value="ECO:0000314"/>
    <property type="project" value="MGI"/>
</dbReference>
<dbReference type="GO" id="GO:0042622">
    <property type="term" value="C:photoreceptor outer segment membrane"/>
    <property type="evidence" value="ECO:0000314"/>
    <property type="project" value="BHF-UCL"/>
</dbReference>
<dbReference type="GO" id="GO:0042803">
    <property type="term" value="F:protein homodimerization activity"/>
    <property type="evidence" value="ECO:0000353"/>
    <property type="project" value="MGI"/>
</dbReference>
<dbReference type="GO" id="GO:0060219">
    <property type="term" value="P:camera-type eye photoreceptor cell differentiation"/>
    <property type="evidence" value="ECO:0000315"/>
    <property type="project" value="MGI"/>
</dbReference>
<dbReference type="GO" id="GO:0007155">
    <property type="term" value="P:cell adhesion"/>
    <property type="evidence" value="ECO:0007669"/>
    <property type="project" value="UniProtKB-KW"/>
</dbReference>
<dbReference type="GO" id="GO:0050908">
    <property type="term" value="P:detection of light stimulus involved in visual perception"/>
    <property type="evidence" value="ECO:0000316"/>
    <property type="project" value="MGI"/>
</dbReference>
<dbReference type="GO" id="GO:0035845">
    <property type="term" value="P:photoreceptor cell outer segment organization"/>
    <property type="evidence" value="ECO:0000315"/>
    <property type="project" value="MGI"/>
</dbReference>
<dbReference type="GO" id="GO:0051291">
    <property type="term" value="P:protein heterooligomerization"/>
    <property type="evidence" value="ECO:0000353"/>
    <property type="project" value="MGI"/>
</dbReference>
<dbReference type="GO" id="GO:0051260">
    <property type="term" value="P:protein homooligomerization"/>
    <property type="evidence" value="ECO:0000353"/>
    <property type="project" value="MGI"/>
</dbReference>
<dbReference type="GO" id="GO:1903546">
    <property type="term" value="P:protein localization to photoreceptor outer segment"/>
    <property type="evidence" value="ECO:0000314"/>
    <property type="project" value="MGI"/>
</dbReference>
<dbReference type="GO" id="GO:0010468">
    <property type="term" value="P:regulation of gene expression"/>
    <property type="evidence" value="ECO:0000315"/>
    <property type="project" value="MGI"/>
</dbReference>
<dbReference type="GO" id="GO:0060041">
    <property type="term" value="P:retina development in camera-type eye"/>
    <property type="evidence" value="ECO:0000315"/>
    <property type="project" value="MGI"/>
</dbReference>
<dbReference type="GO" id="GO:0060042">
    <property type="term" value="P:retina morphogenesis in camera-type eye"/>
    <property type="evidence" value="ECO:0000315"/>
    <property type="project" value="MGI"/>
</dbReference>
<dbReference type="GO" id="GO:0061298">
    <property type="term" value="P:retina vasculature development in camera-type eye"/>
    <property type="evidence" value="ECO:0000315"/>
    <property type="project" value="MGI"/>
</dbReference>
<dbReference type="CDD" id="cd03162">
    <property type="entry name" value="peripherin_like_LEL"/>
    <property type="match status" value="1"/>
</dbReference>
<dbReference type="FunFam" id="1.10.1450.10:FF:000002">
    <property type="entry name" value="Retinal outer segment membrane protein 1"/>
    <property type="match status" value="1"/>
</dbReference>
<dbReference type="Gene3D" id="1.10.1450.10">
    <property type="entry name" value="Tetraspanin"/>
    <property type="match status" value="1"/>
</dbReference>
<dbReference type="InterPro" id="IPR000830">
    <property type="entry name" value="Peripherin/rom-1"/>
</dbReference>
<dbReference type="InterPro" id="IPR018498">
    <property type="entry name" value="Peripherin/rom-1_CS"/>
</dbReference>
<dbReference type="InterPro" id="IPR042026">
    <property type="entry name" value="Peripherin_LEL"/>
</dbReference>
<dbReference type="InterPro" id="IPR018499">
    <property type="entry name" value="Tetraspanin/Peripherin"/>
</dbReference>
<dbReference type="InterPro" id="IPR008952">
    <property type="entry name" value="Tetraspanin_EC2_sf"/>
</dbReference>
<dbReference type="Pfam" id="PF00335">
    <property type="entry name" value="Tetraspanin"/>
    <property type="match status" value="1"/>
</dbReference>
<dbReference type="PRINTS" id="PR00218">
    <property type="entry name" value="PERIPHERNRDS"/>
</dbReference>
<dbReference type="SUPFAM" id="SSF48652">
    <property type="entry name" value="Tetraspanin"/>
    <property type="match status" value="1"/>
</dbReference>
<dbReference type="PROSITE" id="PS00930">
    <property type="entry name" value="RDS_ROM1"/>
    <property type="match status" value="1"/>
</dbReference>
<keyword id="KW-0130">Cell adhesion</keyword>
<keyword id="KW-0966">Cell projection</keyword>
<keyword id="KW-1015">Disulfide bond</keyword>
<keyword id="KW-0472">Membrane</keyword>
<keyword id="KW-1185">Reference proteome</keyword>
<keyword id="KW-0716">Sensory transduction</keyword>
<keyword id="KW-0812">Transmembrane</keyword>
<keyword id="KW-1133">Transmembrane helix</keyword>
<keyword id="KW-0844">Vision</keyword>
<evidence type="ECO:0000250" key="1">
    <source>
        <dbReference type="UniProtKB" id="P52205"/>
    </source>
</evidence>
<evidence type="ECO:0000255" key="2"/>
<evidence type="ECO:0000256" key="3">
    <source>
        <dbReference type="SAM" id="MobiDB-lite"/>
    </source>
</evidence>
<evidence type="ECO:0000269" key="4">
    <source>
    </source>
</evidence>
<evidence type="ECO:0000269" key="5">
    <source>
    </source>
</evidence>
<evidence type="ECO:0000269" key="6">
    <source>
    </source>
</evidence>
<evidence type="ECO:0000305" key="7"/>
<evidence type="ECO:0000305" key="8">
    <source>
    </source>
</evidence>
<evidence type="ECO:0000305" key="9">
    <source>
    </source>
</evidence>
<reference key="1">
    <citation type="journal article" date="1993" name="Hum. Mol. Genet.">
        <title>Cloning of the human and murine ROM1 genes: genomic organization and sequence conservation.</title>
        <authorList>
            <person name="Bascom R.A."/>
            <person name="Schappert K.T."/>
            <person name="McInnes R.R."/>
        </authorList>
    </citation>
    <scope>NUCLEOTIDE SEQUENCE [GENOMIC DNA]</scope>
</reference>
<reference key="2">
    <citation type="journal article" date="2004" name="Genome Res.">
        <title>The status, quality, and expansion of the NIH full-length cDNA project: the Mammalian Gene Collection (MGC).</title>
        <authorList>
            <consortium name="The MGC Project Team"/>
        </authorList>
    </citation>
    <scope>NUCLEOTIDE SEQUENCE [LARGE SCALE MRNA]</scope>
    <source>
        <tissue>Eye</tissue>
    </source>
</reference>
<reference key="3">
    <citation type="journal article" date="2000" name="Nat. Genet.">
        <title>Rom-1 is required for rod photoreceptor viability and the regulation of disk morphogenesis.</title>
        <authorList>
            <person name="Clarke G."/>
            <person name="Goldberg A.F."/>
            <person name="Vidgen D."/>
            <person name="Collins L."/>
            <person name="Ploder L."/>
            <person name="Schwarz L."/>
            <person name="Molday L.L."/>
            <person name="Rossant J."/>
            <person name="Szel A."/>
            <person name="Molday R.S."/>
            <person name="Birch D.G."/>
            <person name="McInnes R.R."/>
        </authorList>
    </citation>
    <scope>FUNCTION</scope>
    <scope>DISRUPTION PHENOTYPE</scope>
</reference>
<reference key="4">
    <citation type="journal article" date="2015" name="PLoS ONE">
        <title>SNAREs Interact with Retinal Degeneration Slow and Rod Outer Segment Membrane Protein-1 during Conventional and Unconventional Outer Segment Targeting.</title>
        <authorList>
            <person name="Zulliger R."/>
            <person name="Conley S.M."/>
            <person name="Mwoyosvi M.L."/>
            <person name="Stuck M.W."/>
            <person name="Azadi S."/>
            <person name="Naash M.I."/>
        </authorList>
    </citation>
    <scope>INTERACTION WITH PRPH2; STX3 AND SNAP25</scope>
    <scope>SUBCELLULAR LOCATION</scope>
    <scope>TISSUE SPECIFICITY</scope>
</reference>
<reference key="5">
    <citation type="journal article" date="2018" name="Hum. Mol. Genet.">
        <title>Oligomerization of Prph2 and Rom1 is essential for photoreceptor outer segment formation.</title>
        <authorList>
            <person name="Zulliger R."/>
            <person name="Conley S.M."/>
            <person name="Mwoyosvi M.L."/>
            <person name="Al-Ubaidi M.R."/>
            <person name="Naash M.I."/>
        </authorList>
    </citation>
    <scope>INTERACTION WITH PRPH2</scope>
    <scope>SUBCELLULAR LOCATION</scope>
</reference>
<proteinExistence type="evidence at protein level"/>
<gene>
    <name type="primary">Rom1</name>
    <name type="synonym">Rom-1</name>
</gene>